<feature type="initiator methionine" description="Removed" evidence="2">
    <location>
        <position position="1"/>
    </location>
</feature>
<feature type="chain" id="PRO_0000434508" description="Tyrosine protein-kinase src-2" evidence="9">
    <location>
        <begin position="2"/>
        <end position="507"/>
    </location>
</feature>
<feature type="domain" description="SH3" evidence="5">
    <location>
        <begin position="57"/>
        <end position="118"/>
    </location>
</feature>
<feature type="domain" description="SH2" evidence="4">
    <location>
        <begin position="124"/>
        <end position="216"/>
    </location>
</feature>
<feature type="domain" description="Protein kinase" evidence="3">
    <location>
        <begin position="240"/>
        <end position="494"/>
    </location>
</feature>
<feature type="region of interest" description="Disordered" evidence="6">
    <location>
        <begin position="1"/>
        <end position="52"/>
    </location>
</feature>
<feature type="compositionally biased region" description="Basic and acidic residues" evidence="6">
    <location>
        <begin position="1"/>
        <end position="10"/>
    </location>
</feature>
<feature type="compositionally biased region" description="Low complexity" evidence="6">
    <location>
        <begin position="35"/>
        <end position="47"/>
    </location>
</feature>
<feature type="active site" description="Proton acceptor" evidence="3">
    <location>
        <position position="358"/>
    </location>
</feature>
<feature type="binding site" evidence="3">
    <location>
        <begin position="246"/>
        <end position="254"/>
    </location>
    <ligand>
        <name>ATP</name>
        <dbReference type="ChEBI" id="CHEBI:30616"/>
    </ligand>
</feature>
<feature type="binding site" evidence="3">
    <location>
        <position position="268"/>
    </location>
    <ligand>
        <name>ATP</name>
        <dbReference type="ChEBI" id="CHEBI:30616"/>
    </ligand>
</feature>
<feature type="modified residue" description="Phosphotyrosine" evidence="10">
    <location>
        <position position="500"/>
    </location>
</feature>
<feature type="lipid moiety-binding region" description="N-myristoyl glycine" evidence="2">
    <location>
        <position position="2"/>
    </location>
</feature>
<feature type="mutagenesis site" description="Probable loss of kinase activity. In a wild type background, 30 percent die at the larval stage and 4 percent of surviving animals have abnormalities in the pharynx structure." evidence="7">
    <original>K</original>
    <variation>M</variation>
    <location>
        <position position="268"/>
    </location>
</feature>
<feature type="mutagenesis site" description="Abolishes phosphorylation which results in constitutive activation. In a wild type background, 76 percent die at the larval stage and 34 percent of surviving animals have abnormalities in the pharynx structure." evidence="7">
    <original>Y</original>
    <variation>F</variation>
    <location>
        <position position="500"/>
    </location>
</feature>
<evidence type="ECO:0000250" key="1">
    <source>
        <dbReference type="UniProtKB" id="G5EE56"/>
    </source>
</evidence>
<evidence type="ECO:0000255" key="2"/>
<evidence type="ECO:0000255" key="3">
    <source>
        <dbReference type="PROSITE-ProRule" id="PRU00159"/>
    </source>
</evidence>
<evidence type="ECO:0000255" key="4">
    <source>
        <dbReference type="PROSITE-ProRule" id="PRU00191"/>
    </source>
</evidence>
<evidence type="ECO:0000255" key="5">
    <source>
        <dbReference type="PROSITE-ProRule" id="PRU00192"/>
    </source>
</evidence>
<evidence type="ECO:0000256" key="6">
    <source>
        <dbReference type="SAM" id="MobiDB-lite"/>
    </source>
</evidence>
<evidence type="ECO:0000269" key="7">
    <source>
    </source>
</evidence>
<evidence type="ECO:0000269" key="8">
    <source>
    </source>
</evidence>
<evidence type="ECO:0000305" key="9"/>
<evidence type="ECO:0000305" key="10">
    <source>
    </source>
</evidence>
<evidence type="ECO:0000312" key="11">
    <source>
        <dbReference type="Proteomes" id="UP000001940"/>
    </source>
</evidence>
<evidence type="ECO:0000312" key="12">
    <source>
        <dbReference type="WormBase" id="F49B2.5"/>
    </source>
</evidence>
<name>SRC2_CAEEL</name>
<accession>O45539</accession>
<keyword id="KW-0067">ATP-binding</keyword>
<keyword id="KW-0418">Kinase</keyword>
<keyword id="KW-0449">Lipoprotein</keyword>
<keyword id="KW-0464">Manganese</keyword>
<keyword id="KW-0479">Metal-binding</keyword>
<keyword id="KW-0519">Myristate</keyword>
<keyword id="KW-0547">Nucleotide-binding</keyword>
<keyword id="KW-0597">Phosphoprotein</keyword>
<keyword id="KW-1185">Reference proteome</keyword>
<keyword id="KW-0727">SH2 domain</keyword>
<keyword id="KW-0728">SH3 domain</keyword>
<keyword id="KW-0808">Transferase</keyword>
<keyword id="KW-0829">Tyrosine-protein kinase</keyword>
<dbReference type="EC" id="2.7.10.2" evidence="7"/>
<dbReference type="EMBL" id="BX284601">
    <property type="protein sequence ID" value="CAB04427.2"/>
    <property type="molecule type" value="Genomic_DNA"/>
</dbReference>
<dbReference type="PIR" id="T22405">
    <property type="entry name" value="T22405"/>
</dbReference>
<dbReference type="RefSeq" id="NP_493502.1">
    <property type="nucleotide sequence ID" value="NM_061101.5"/>
</dbReference>
<dbReference type="SMR" id="O45539"/>
<dbReference type="DIP" id="DIP-26743N"/>
<dbReference type="FunCoup" id="O45539">
    <property type="interactions" value="1435"/>
</dbReference>
<dbReference type="IntAct" id="O45539">
    <property type="interactions" value="42"/>
</dbReference>
<dbReference type="MINT" id="O45539"/>
<dbReference type="STRING" id="6239.F49B2.5.1"/>
<dbReference type="iPTMnet" id="O45539"/>
<dbReference type="PaxDb" id="6239-F49B2.5"/>
<dbReference type="EnsemblMetazoa" id="F49B2.5.1">
    <property type="protein sequence ID" value="F49B2.5.1"/>
    <property type="gene ID" value="WBGene00005078"/>
</dbReference>
<dbReference type="GeneID" id="173296"/>
<dbReference type="KEGG" id="cel:CELE_F49B2.5"/>
<dbReference type="UCSC" id="F49B2.5">
    <property type="organism name" value="c. elegans"/>
</dbReference>
<dbReference type="AGR" id="WB:WBGene00005078"/>
<dbReference type="CTD" id="173296"/>
<dbReference type="WormBase" id="F49B2.5">
    <property type="protein sequence ID" value="CE24991"/>
    <property type="gene ID" value="WBGene00005078"/>
    <property type="gene designation" value="src-2"/>
</dbReference>
<dbReference type="eggNOG" id="KOG0197">
    <property type="taxonomic scope" value="Eukaryota"/>
</dbReference>
<dbReference type="GeneTree" id="ENSGT00940000167963"/>
<dbReference type="HOGENOM" id="CLU_000288_7_2_1"/>
<dbReference type="InParanoid" id="O45539"/>
<dbReference type="OMA" id="EYKEASM"/>
<dbReference type="OrthoDB" id="28230at2759"/>
<dbReference type="PhylomeDB" id="O45539"/>
<dbReference type="Reactome" id="R-CEL-6798695">
    <property type="pathway name" value="Neutrophil degranulation"/>
</dbReference>
<dbReference type="Reactome" id="R-CEL-8948751">
    <property type="pathway name" value="Regulation of PTEN stability and activity"/>
</dbReference>
<dbReference type="SignaLink" id="O45539"/>
<dbReference type="PRO" id="PR:O45539"/>
<dbReference type="Proteomes" id="UP000001940">
    <property type="component" value="Chromosome I"/>
</dbReference>
<dbReference type="Bgee" id="WBGene00005078">
    <property type="expression patterns" value="Expressed in pharyngeal muscle cell (C elegans) and 3 other cell types or tissues"/>
</dbReference>
<dbReference type="GO" id="GO:0005886">
    <property type="term" value="C:plasma membrane"/>
    <property type="evidence" value="ECO:0000318"/>
    <property type="project" value="GO_Central"/>
</dbReference>
<dbReference type="GO" id="GO:0005524">
    <property type="term" value="F:ATP binding"/>
    <property type="evidence" value="ECO:0007669"/>
    <property type="project" value="UniProtKB-KW"/>
</dbReference>
<dbReference type="GO" id="GO:0046872">
    <property type="term" value="F:metal ion binding"/>
    <property type="evidence" value="ECO:0007669"/>
    <property type="project" value="UniProtKB-KW"/>
</dbReference>
<dbReference type="GO" id="GO:0004715">
    <property type="term" value="F:non-membrane spanning protein tyrosine kinase activity"/>
    <property type="evidence" value="ECO:0000318"/>
    <property type="project" value="GO_Central"/>
</dbReference>
<dbReference type="GO" id="GO:0005102">
    <property type="term" value="F:signaling receptor binding"/>
    <property type="evidence" value="ECO:0000318"/>
    <property type="project" value="GO_Central"/>
</dbReference>
<dbReference type="GO" id="GO:0030154">
    <property type="term" value="P:cell differentiation"/>
    <property type="evidence" value="ECO:0000318"/>
    <property type="project" value="GO_Central"/>
</dbReference>
<dbReference type="GO" id="GO:0007169">
    <property type="term" value="P:cell surface receptor protein tyrosine kinase signaling pathway"/>
    <property type="evidence" value="ECO:0000318"/>
    <property type="project" value="GO_Central"/>
</dbReference>
<dbReference type="GO" id="GO:0160094">
    <property type="term" value="P:nematode pharynx development"/>
    <property type="evidence" value="ECO:0000315"/>
    <property type="project" value="UniProtKB"/>
</dbReference>
<dbReference type="CDD" id="cd05068">
    <property type="entry name" value="PTKc_Frk_like"/>
    <property type="match status" value="1"/>
</dbReference>
<dbReference type="CDD" id="cd10370">
    <property type="entry name" value="SH2_Src_Src42"/>
    <property type="match status" value="1"/>
</dbReference>
<dbReference type="CDD" id="cd11845">
    <property type="entry name" value="SH3_Src_like"/>
    <property type="match status" value="1"/>
</dbReference>
<dbReference type="FunFam" id="1.10.510.10:FF:000318">
    <property type="entry name" value="Tyrosine-protein kinase"/>
    <property type="match status" value="1"/>
</dbReference>
<dbReference type="FunFam" id="2.30.30.40:FF:000208">
    <property type="entry name" value="Tyrosine-protein kinase"/>
    <property type="match status" value="1"/>
</dbReference>
<dbReference type="FunFam" id="3.30.200.20:FF:000053">
    <property type="entry name" value="Tyrosine-protein kinase"/>
    <property type="match status" value="1"/>
</dbReference>
<dbReference type="FunFam" id="3.30.505.10:FF:000044">
    <property type="entry name" value="Tyrosine-protein kinase"/>
    <property type="match status" value="1"/>
</dbReference>
<dbReference type="Gene3D" id="3.30.200.20">
    <property type="entry name" value="Phosphorylase Kinase, domain 1"/>
    <property type="match status" value="1"/>
</dbReference>
<dbReference type="Gene3D" id="3.30.505.10">
    <property type="entry name" value="SH2 domain"/>
    <property type="match status" value="1"/>
</dbReference>
<dbReference type="Gene3D" id="2.30.30.40">
    <property type="entry name" value="SH3 Domains"/>
    <property type="match status" value="1"/>
</dbReference>
<dbReference type="Gene3D" id="1.10.510.10">
    <property type="entry name" value="Transferase(Phosphotransferase) domain 1"/>
    <property type="match status" value="1"/>
</dbReference>
<dbReference type="InterPro" id="IPR011009">
    <property type="entry name" value="Kinase-like_dom_sf"/>
</dbReference>
<dbReference type="InterPro" id="IPR050198">
    <property type="entry name" value="Non-receptor_tyrosine_kinases"/>
</dbReference>
<dbReference type="InterPro" id="IPR000719">
    <property type="entry name" value="Prot_kinase_dom"/>
</dbReference>
<dbReference type="InterPro" id="IPR017441">
    <property type="entry name" value="Protein_kinase_ATP_BS"/>
</dbReference>
<dbReference type="InterPro" id="IPR001245">
    <property type="entry name" value="Ser-Thr/Tyr_kinase_cat_dom"/>
</dbReference>
<dbReference type="InterPro" id="IPR000980">
    <property type="entry name" value="SH2"/>
</dbReference>
<dbReference type="InterPro" id="IPR036860">
    <property type="entry name" value="SH2_dom_sf"/>
</dbReference>
<dbReference type="InterPro" id="IPR036028">
    <property type="entry name" value="SH3-like_dom_sf"/>
</dbReference>
<dbReference type="InterPro" id="IPR001452">
    <property type="entry name" value="SH3_domain"/>
</dbReference>
<dbReference type="InterPro" id="IPR008266">
    <property type="entry name" value="Tyr_kinase_AS"/>
</dbReference>
<dbReference type="InterPro" id="IPR020635">
    <property type="entry name" value="Tyr_kinase_cat_dom"/>
</dbReference>
<dbReference type="PANTHER" id="PTHR24418">
    <property type="entry name" value="TYROSINE-PROTEIN KINASE"/>
    <property type="match status" value="1"/>
</dbReference>
<dbReference type="Pfam" id="PF07714">
    <property type="entry name" value="PK_Tyr_Ser-Thr"/>
    <property type="match status" value="1"/>
</dbReference>
<dbReference type="Pfam" id="PF00017">
    <property type="entry name" value="SH2"/>
    <property type="match status" value="1"/>
</dbReference>
<dbReference type="Pfam" id="PF00018">
    <property type="entry name" value="SH3_1"/>
    <property type="match status" value="1"/>
</dbReference>
<dbReference type="PRINTS" id="PR00401">
    <property type="entry name" value="SH2DOMAIN"/>
</dbReference>
<dbReference type="PRINTS" id="PR00452">
    <property type="entry name" value="SH3DOMAIN"/>
</dbReference>
<dbReference type="PRINTS" id="PR00109">
    <property type="entry name" value="TYRKINASE"/>
</dbReference>
<dbReference type="SMART" id="SM00252">
    <property type="entry name" value="SH2"/>
    <property type="match status" value="1"/>
</dbReference>
<dbReference type="SMART" id="SM00326">
    <property type="entry name" value="SH3"/>
    <property type="match status" value="1"/>
</dbReference>
<dbReference type="SMART" id="SM00219">
    <property type="entry name" value="TyrKc"/>
    <property type="match status" value="1"/>
</dbReference>
<dbReference type="SUPFAM" id="SSF56112">
    <property type="entry name" value="Protein kinase-like (PK-like)"/>
    <property type="match status" value="1"/>
</dbReference>
<dbReference type="SUPFAM" id="SSF55550">
    <property type="entry name" value="SH2 domain"/>
    <property type="match status" value="1"/>
</dbReference>
<dbReference type="SUPFAM" id="SSF50044">
    <property type="entry name" value="SH3-domain"/>
    <property type="match status" value="1"/>
</dbReference>
<dbReference type="PROSITE" id="PS00107">
    <property type="entry name" value="PROTEIN_KINASE_ATP"/>
    <property type="match status" value="1"/>
</dbReference>
<dbReference type="PROSITE" id="PS50011">
    <property type="entry name" value="PROTEIN_KINASE_DOM"/>
    <property type="match status" value="1"/>
</dbReference>
<dbReference type="PROSITE" id="PS00109">
    <property type="entry name" value="PROTEIN_KINASE_TYR"/>
    <property type="match status" value="1"/>
</dbReference>
<dbReference type="PROSITE" id="PS50001">
    <property type="entry name" value="SH2"/>
    <property type="match status" value="1"/>
</dbReference>
<dbReference type="PROSITE" id="PS50002">
    <property type="entry name" value="SH3"/>
    <property type="match status" value="1"/>
</dbReference>
<organism evidence="11">
    <name type="scientific">Caenorhabditis elegans</name>
    <dbReference type="NCBI Taxonomy" id="6239"/>
    <lineage>
        <taxon>Eukaryota</taxon>
        <taxon>Metazoa</taxon>
        <taxon>Ecdysozoa</taxon>
        <taxon>Nematoda</taxon>
        <taxon>Chromadorea</taxon>
        <taxon>Rhabditida</taxon>
        <taxon>Rhabditina</taxon>
        <taxon>Rhabditomorpha</taxon>
        <taxon>Rhabditoidea</taxon>
        <taxon>Rhabditidae</taxon>
        <taxon>Peloderinae</taxon>
        <taxon>Caenorhabditis</taxon>
    </lineage>
</organism>
<comment type="function">
    <text evidence="7">Non-receptor tyrosine-protein kinase which may play a role in larval and pharynx development. Unlike src-1, does not play a role in embryonic development.</text>
</comment>
<comment type="catalytic activity">
    <reaction evidence="7">
        <text>L-tyrosyl-[protein] + ATP = O-phospho-L-tyrosyl-[protein] + ADP + H(+)</text>
        <dbReference type="Rhea" id="RHEA:10596"/>
        <dbReference type="Rhea" id="RHEA-COMP:10136"/>
        <dbReference type="Rhea" id="RHEA-COMP:20101"/>
        <dbReference type="ChEBI" id="CHEBI:15378"/>
        <dbReference type="ChEBI" id="CHEBI:30616"/>
        <dbReference type="ChEBI" id="CHEBI:46858"/>
        <dbReference type="ChEBI" id="CHEBI:61978"/>
        <dbReference type="ChEBI" id="CHEBI:456216"/>
        <dbReference type="EC" id="2.7.10.2"/>
    </reaction>
</comment>
<comment type="cofactor">
    <cofactor evidence="1">
        <name>Mg(2+)</name>
        <dbReference type="ChEBI" id="CHEBI:18420"/>
    </cofactor>
    <cofactor evidence="1">
        <name>Mn(2+)</name>
        <dbReference type="ChEBI" id="CHEBI:29035"/>
    </cofactor>
</comment>
<comment type="activity regulation">
    <text evidence="10">May be inhibited by csk-1-mediated phosphorylation at Tyr-500.</text>
</comment>
<comment type="tissue specificity">
    <text evidence="7">Expressed in vulva, cells around anus and pharyngeal muscles.</text>
</comment>
<comment type="PTM">
    <text evidence="7">May be phosphorylated on Tyr-500 by csk-1.</text>
</comment>
<comment type="disruption phenotype">
    <text evidence="7 8">RNAi-mediated knockdown causes no obvious effect on embryonic development (PubMed:12527374). Animals have a slight decrease in unc-5 tyrosine phosphorylation (PubMed:16024786).</text>
</comment>
<comment type="similarity">
    <text evidence="9">Belongs to the protein kinase superfamily. Tyr protein kinase family. SRC subfamily.</text>
</comment>
<gene>
    <name evidence="12" type="primary">src-2</name>
    <name evidence="12" type="synonym">kin-22</name>
    <name evidence="12" type="ORF">F49B2.5</name>
</gene>
<proteinExistence type="evidence at protein level"/>
<sequence>MGSCIGKEDPPPGATSPVHTSSTLGRESLPSHPRIPSIGPIAASSSGNTIDKNQNISQSANFVALFQYDARTDDDLSFKKDDILEILNDTQGDWWFARHKATGRTGYIPSNYVAREKSIESQPWYFGKMRRIDAEKCLLHTLNEHGAFLVRDSESRQHDLSLSVRENDSVKHYRIRQLDHGGYFIARRRPFATLHDLIAHYQREADGLCVNLGAPCAKSEAPQTTTFTYDDQWEVDRRSVRLIRQIGAGQFGEVWEGRWNVNVPVAVKKLKAGTADPTDFLAEAQIMKKLRHPKLLSLYAVCTRDEPILIVTELMQENLLTFLQRRGRQCQMPQLVEISAQVAAGMAYLEEMNFIHRDLAARNILINNSLSVKIADFGLARILMKENEYEARTGARFPIKWTAPEAANYNRFTTKSDVWSFGILLTEIVTFGRLPYPGMTNAEVLQQVDAGYRMPCPAGCPVTLYDIMQQCWRSDPDKRPTFETLQWKLEDLFNLDSSEYKEASINF</sequence>
<reference evidence="9" key="1">
    <citation type="journal article" date="2003" name="FEBS Lett.">
        <title>Distinct roles of the Src family kinases, SRC-1 and KIN-22, that are negatively regulated by CSK-1 in C. elegans.</title>
        <authorList>
            <person name="Hirose T."/>
            <person name="Koga M."/>
            <person name="Ohshima Y."/>
            <person name="Okada M."/>
        </authorList>
    </citation>
    <scope>NUCLEOTIDE SEQUENCE [MRNA]</scope>
    <scope>FUNCTION</scope>
    <scope>CATALYTIC ACTIVITY</scope>
    <scope>ACTIVITY REGULATION</scope>
    <scope>TISSUE SPECIFICITY</scope>
    <scope>PHOSPHORYLATION AT TYR-500</scope>
    <scope>DISRUPTION PHENOTYPE</scope>
    <scope>MUTAGENESIS OF LYS-268 AND TYR-500</scope>
</reference>
<reference evidence="11" key="2">
    <citation type="journal article" date="1998" name="Science">
        <title>Genome sequence of the nematode C. elegans: a platform for investigating biology.</title>
        <authorList>
            <consortium name="The C. elegans sequencing consortium"/>
        </authorList>
    </citation>
    <scope>NUCLEOTIDE SEQUENCE [LARGE SCALE GENOMIC DNA]</scope>
    <source>
        <strain evidence="11">Bristol N2</strain>
    </source>
</reference>
<reference evidence="9" key="3">
    <citation type="journal article" date="2005" name="Mol. Cell. Biol.">
        <title>SRC-1 mediates UNC-5 signaling in Caenorhabditis elegans.</title>
        <authorList>
            <person name="Lee J."/>
            <person name="Li W."/>
            <person name="Guan K.L."/>
        </authorList>
    </citation>
    <scope>DISRUPTION PHENOTYPE</scope>
</reference>
<protein>
    <recommendedName>
        <fullName evidence="9">Tyrosine protein-kinase src-2</fullName>
        <ecNumber evidence="7">2.7.10.2</ecNumber>
    </recommendedName>
    <alternativeName>
        <fullName evidence="12">SRC oncogene related protein 2</fullName>
    </alternativeName>
</protein>